<gene>
    <name evidence="1" type="primary">murA</name>
    <name type="ordered locus">xcc-b100_1365</name>
</gene>
<sequence length="424" mass="44473">MAKIVVTGGQALHGEVHISGAKNAVLPILCATLLADAPVEISNVPHLHDVITTVKLLSELGAEVTIDEGTLAKGRSILVDPRSVTHQIAPYELVKTMRASILVLGPLLARYGTAEVSLPGGCAIGSRPVDQHIKGLQALGADISVENGYIKATSNGRLKGGRYVFDMVSVTGTENVLMAAVLAEGTTVLENAAMEPEVTDLADCLIALGAQIEGAGTPRITVQGVERLGGGHHAVLPDRIETGTFLVAAAMTGGSVTVRRARPDTLDAVLDKLTEAGATITTTAESVTLDMHGKRPRAVNLTTAPYPAFPTDMQAQFMALNCVAEGVGVINETIFENRFMHVNELLRLGADIQVEGHTAIVRGAERLSGAPVMATDLRASASLILAGLVADGDTTIDRIYHLDRGYENIEEKLGALGATIRRIA</sequence>
<keyword id="KW-0131">Cell cycle</keyword>
<keyword id="KW-0132">Cell division</keyword>
<keyword id="KW-0133">Cell shape</keyword>
<keyword id="KW-0961">Cell wall biogenesis/degradation</keyword>
<keyword id="KW-0963">Cytoplasm</keyword>
<keyword id="KW-0573">Peptidoglycan synthesis</keyword>
<keyword id="KW-0670">Pyruvate</keyword>
<keyword id="KW-0808">Transferase</keyword>
<protein>
    <recommendedName>
        <fullName evidence="1">UDP-N-acetylglucosamine 1-carboxyvinyltransferase</fullName>
        <ecNumber evidence="1">2.5.1.7</ecNumber>
    </recommendedName>
    <alternativeName>
        <fullName evidence="1">Enoylpyruvate transferase</fullName>
    </alternativeName>
    <alternativeName>
        <fullName evidence="1">UDP-N-acetylglucosamine enolpyruvyl transferase</fullName>
        <shortName evidence="1">EPT</shortName>
    </alternativeName>
</protein>
<reference key="1">
    <citation type="journal article" date="2008" name="J. Biotechnol.">
        <title>The genome of Xanthomonas campestris pv. campestris B100 and its use for the reconstruction of metabolic pathways involved in xanthan biosynthesis.</title>
        <authorList>
            <person name="Vorhoelter F.-J."/>
            <person name="Schneiker S."/>
            <person name="Goesmann A."/>
            <person name="Krause L."/>
            <person name="Bekel T."/>
            <person name="Kaiser O."/>
            <person name="Linke B."/>
            <person name="Patschkowski T."/>
            <person name="Rueckert C."/>
            <person name="Schmid J."/>
            <person name="Sidhu V.K."/>
            <person name="Sieber V."/>
            <person name="Tauch A."/>
            <person name="Watt S.A."/>
            <person name="Weisshaar B."/>
            <person name="Becker A."/>
            <person name="Niehaus K."/>
            <person name="Puehler A."/>
        </authorList>
    </citation>
    <scope>NUCLEOTIDE SEQUENCE [LARGE SCALE GENOMIC DNA]</scope>
    <source>
        <strain>B100</strain>
    </source>
</reference>
<name>MURA_XANCB</name>
<evidence type="ECO:0000255" key="1">
    <source>
        <dbReference type="HAMAP-Rule" id="MF_00111"/>
    </source>
</evidence>
<comment type="function">
    <text evidence="1">Cell wall formation. Adds enolpyruvyl to UDP-N-acetylglucosamine.</text>
</comment>
<comment type="catalytic activity">
    <reaction evidence="1">
        <text>phosphoenolpyruvate + UDP-N-acetyl-alpha-D-glucosamine = UDP-N-acetyl-3-O-(1-carboxyvinyl)-alpha-D-glucosamine + phosphate</text>
        <dbReference type="Rhea" id="RHEA:18681"/>
        <dbReference type="ChEBI" id="CHEBI:43474"/>
        <dbReference type="ChEBI" id="CHEBI:57705"/>
        <dbReference type="ChEBI" id="CHEBI:58702"/>
        <dbReference type="ChEBI" id="CHEBI:68483"/>
        <dbReference type="EC" id="2.5.1.7"/>
    </reaction>
</comment>
<comment type="pathway">
    <text evidence="1">Cell wall biogenesis; peptidoglycan biosynthesis.</text>
</comment>
<comment type="subcellular location">
    <subcellularLocation>
        <location evidence="1">Cytoplasm</location>
    </subcellularLocation>
</comment>
<comment type="similarity">
    <text evidence="1">Belongs to the EPSP synthase family. MurA subfamily.</text>
</comment>
<proteinExistence type="inferred from homology"/>
<feature type="chain" id="PRO_1000094733" description="UDP-N-acetylglucosamine 1-carboxyvinyltransferase">
    <location>
        <begin position="1"/>
        <end position="424"/>
    </location>
</feature>
<feature type="active site" description="Proton donor" evidence="1">
    <location>
        <position position="122"/>
    </location>
</feature>
<feature type="binding site" evidence="1">
    <location>
        <begin position="22"/>
        <end position="23"/>
    </location>
    <ligand>
        <name>phosphoenolpyruvate</name>
        <dbReference type="ChEBI" id="CHEBI:58702"/>
    </ligand>
</feature>
<feature type="binding site" evidence="1">
    <location>
        <position position="98"/>
    </location>
    <ligand>
        <name>UDP-N-acetyl-alpha-D-glucosamine</name>
        <dbReference type="ChEBI" id="CHEBI:57705"/>
    </ligand>
</feature>
<feature type="binding site" evidence="1">
    <location>
        <begin position="127"/>
        <end position="131"/>
    </location>
    <ligand>
        <name>UDP-N-acetyl-alpha-D-glucosamine</name>
        <dbReference type="ChEBI" id="CHEBI:57705"/>
    </ligand>
</feature>
<feature type="binding site" evidence="1">
    <location>
        <position position="312"/>
    </location>
    <ligand>
        <name>UDP-N-acetyl-alpha-D-glucosamine</name>
        <dbReference type="ChEBI" id="CHEBI:57705"/>
    </ligand>
</feature>
<feature type="binding site" evidence="1">
    <location>
        <position position="334"/>
    </location>
    <ligand>
        <name>UDP-N-acetyl-alpha-D-glucosamine</name>
        <dbReference type="ChEBI" id="CHEBI:57705"/>
    </ligand>
</feature>
<feature type="modified residue" description="2-(S-cysteinyl)pyruvic acid O-phosphothioketal" evidence="1">
    <location>
        <position position="122"/>
    </location>
</feature>
<dbReference type="EC" id="2.5.1.7" evidence="1"/>
<dbReference type="EMBL" id="AM920689">
    <property type="protein sequence ID" value="CAP50715.1"/>
    <property type="molecule type" value="Genomic_DNA"/>
</dbReference>
<dbReference type="SMR" id="B0RQI0"/>
<dbReference type="KEGG" id="xca:xcc-b100_1365"/>
<dbReference type="HOGENOM" id="CLU_027387_0_0_6"/>
<dbReference type="UniPathway" id="UPA00219"/>
<dbReference type="Proteomes" id="UP000001188">
    <property type="component" value="Chromosome"/>
</dbReference>
<dbReference type="GO" id="GO:0005737">
    <property type="term" value="C:cytoplasm"/>
    <property type="evidence" value="ECO:0007669"/>
    <property type="project" value="UniProtKB-SubCell"/>
</dbReference>
<dbReference type="GO" id="GO:0008760">
    <property type="term" value="F:UDP-N-acetylglucosamine 1-carboxyvinyltransferase activity"/>
    <property type="evidence" value="ECO:0007669"/>
    <property type="project" value="UniProtKB-UniRule"/>
</dbReference>
<dbReference type="GO" id="GO:0051301">
    <property type="term" value="P:cell division"/>
    <property type="evidence" value="ECO:0007669"/>
    <property type="project" value="UniProtKB-KW"/>
</dbReference>
<dbReference type="GO" id="GO:0071555">
    <property type="term" value="P:cell wall organization"/>
    <property type="evidence" value="ECO:0007669"/>
    <property type="project" value="UniProtKB-KW"/>
</dbReference>
<dbReference type="GO" id="GO:0009252">
    <property type="term" value="P:peptidoglycan biosynthetic process"/>
    <property type="evidence" value="ECO:0007669"/>
    <property type="project" value="UniProtKB-UniRule"/>
</dbReference>
<dbReference type="GO" id="GO:0008360">
    <property type="term" value="P:regulation of cell shape"/>
    <property type="evidence" value="ECO:0007669"/>
    <property type="project" value="UniProtKB-KW"/>
</dbReference>
<dbReference type="GO" id="GO:0019277">
    <property type="term" value="P:UDP-N-acetylgalactosamine biosynthetic process"/>
    <property type="evidence" value="ECO:0007669"/>
    <property type="project" value="InterPro"/>
</dbReference>
<dbReference type="CDD" id="cd01555">
    <property type="entry name" value="UdpNAET"/>
    <property type="match status" value="1"/>
</dbReference>
<dbReference type="FunFam" id="3.65.10.10:FF:000002">
    <property type="entry name" value="UDP-N-acetylglucosamine 1-carboxyvinyltransferase"/>
    <property type="match status" value="1"/>
</dbReference>
<dbReference type="Gene3D" id="3.65.10.10">
    <property type="entry name" value="Enolpyruvate transferase domain"/>
    <property type="match status" value="2"/>
</dbReference>
<dbReference type="HAMAP" id="MF_00111">
    <property type="entry name" value="MurA"/>
    <property type="match status" value="1"/>
</dbReference>
<dbReference type="InterPro" id="IPR001986">
    <property type="entry name" value="Enolpyruvate_Tfrase_dom"/>
</dbReference>
<dbReference type="InterPro" id="IPR036968">
    <property type="entry name" value="Enolpyruvate_Tfrase_sf"/>
</dbReference>
<dbReference type="InterPro" id="IPR050068">
    <property type="entry name" value="MurA_subfamily"/>
</dbReference>
<dbReference type="InterPro" id="IPR013792">
    <property type="entry name" value="RNA3'P_cycl/enolpyr_Trfase_a/b"/>
</dbReference>
<dbReference type="InterPro" id="IPR005750">
    <property type="entry name" value="UDP_GlcNAc_COvinyl_MurA"/>
</dbReference>
<dbReference type="NCBIfam" id="TIGR01072">
    <property type="entry name" value="murA"/>
    <property type="match status" value="1"/>
</dbReference>
<dbReference type="NCBIfam" id="NF006873">
    <property type="entry name" value="PRK09369.1"/>
    <property type="match status" value="1"/>
</dbReference>
<dbReference type="PANTHER" id="PTHR43783">
    <property type="entry name" value="UDP-N-ACETYLGLUCOSAMINE 1-CARBOXYVINYLTRANSFERASE"/>
    <property type="match status" value="1"/>
</dbReference>
<dbReference type="PANTHER" id="PTHR43783:SF1">
    <property type="entry name" value="UDP-N-ACETYLGLUCOSAMINE 1-CARBOXYVINYLTRANSFERASE"/>
    <property type="match status" value="1"/>
</dbReference>
<dbReference type="Pfam" id="PF00275">
    <property type="entry name" value="EPSP_synthase"/>
    <property type="match status" value="1"/>
</dbReference>
<dbReference type="SUPFAM" id="SSF55205">
    <property type="entry name" value="EPT/RTPC-like"/>
    <property type="match status" value="1"/>
</dbReference>
<organism>
    <name type="scientific">Xanthomonas campestris pv. campestris (strain B100)</name>
    <dbReference type="NCBI Taxonomy" id="509169"/>
    <lineage>
        <taxon>Bacteria</taxon>
        <taxon>Pseudomonadati</taxon>
        <taxon>Pseudomonadota</taxon>
        <taxon>Gammaproteobacteria</taxon>
        <taxon>Lysobacterales</taxon>
        <taxon>Lysobacteraceae</taxon>
        <taxon>Xanthomonas</taxon>
    </lineage>
</organism>
<accession>B0RQI0</accession>